<gene>
    <name evidence="1" type="primary">glmM</name>
    <name type="ordered locus">NMCC_1603</name>
</gene>
<keyword id="KW-0413">Isomerase</keyword>
<keyword id="KW-0460">Magnesium</keyword>
<keyword id="KW-0479">Metal-binding</keyword>
<keyword id="KW-0597">Phosphoprotein</keyword>
<comment type="function">
    <text evidence="1">Catalyzes the conversion of glucosamine-6-phosphate to glucosamine-1-phosphate.</text>
</comment>
<comment type="catalytic activity">
    <reaction evidence="1">
        <text>alpha-D-glucosamine 1-phosphate = D-glucosamine 6-phosphate</text>
        <dbReference type="Rhea" id="RHEA:23424"/>
        <dbReference type="ChEBI" id="CHEBI:58516"/>
        <dbReference type="ChEBI" id="CHEBI:58725"/>
        <dbReference type="EC" id="5.4.2.10"/>
    </reaction>
</comment>
<comment type="cofactor">
    <cofactor evidence="1">
        <name>Mg(2+)</name>
        <dbReference type="ChEBI" id="CHEBI:18420"/>
    </cofactor>
    <text evidence="1">Binds 1 Mg(2+) ion per subunit.</text>
</comment>
<comment type="PTM">
    <text evidence="1">Activated by phosphorylation.</text>
</comment>
<comment type="similarity">
    <text evidence="1">Belongs to the phosphohexose mutase family.</text>
</comment>
<accession>A9M1R2</accession>
<proteinExistence type="inferred from homology"/>
<name>GLMM_NEIM0</name>
<dbReference type="EC" id="5.4.2.10" evidence="1"/>
<dbReference type="EMBL" id="CP000381">
    <property type="protein sequence ID" value="ABX73751.1"/>
    <property type="molecule type" value="Genomic_DNA"/>
</dbReference>
<dbReference type="RefSeq" id="WP_012221936.1">
    <property type="nucleotide sequence ID" value="NC_010120.1"/>
</dbReference>
<dbReference type="SMR" id="A9M1R2"/>
<dbReference type="KEGG" id="nmn:NMCC_1603"/>
<dbReference type="HOGENOM" id="CLU_016950_7_0_4"/>
<dbReference type="Proteomes" id="UP000001177">
    <property type="component" value="Chromosome"/>
</dbReference>
<dbReference type="GO" id="GO:0005829">
    <property type="term" value="C:cytosol"/>
    <property type="evidence" value="ECO:0007669"/>
    <property type="project" value="TreeGrafter"/>
</dbReference>
<dbReference type="GO" id="GO:0000287">
    <property type="term" value="F:magnesium ion binding"/>
    <property type="evidence" value="ECO:0007669"/>
    <property type="project" value="UniProtKB-UniRule"/>
</dbReference>
<dbReference type="GO" id="GO:0008966">
    <property type="term" value="F:phosphoglucosamine mutase activity"/>
    <property type="evidence" value="ECO:0007669"/>
    <property type="project" value="UniProtKB-UniRule"/>
</dbReference>
<dbReference type="GO" id="GO:0004615">
    <property type="term" value="F:phosphomannomutase activity"/>
    <property type="evidence" value="ECO:0007669"/>
    <property type="project" value="TreeGrafter"/>
</dbReference>
<dbReference type="GO" id="GO:0005975">
    <property type="term" value="P:carbohydrate metabolic process"/>
    <property type="evidence" value="ECO:0007669"/>
    <property type="project" value="InterPro"/>
</dbReference>
<dbReference type="GO" id="GO:0009252">
    <property type="term" value="P:peptidoglycan biosynthetic process"/>
    <property type="evidence" value="ECO:0007669"/>
    <property type="project" value="TreeGrafter"/>
</dbReference>
<dbReference type="GO" id="GO:0006048">
    <property type="term" value="P:UDP-N-acetylglucosamine biosynthetic process"/>
    <property type="evidence" value="ECO:0007669"/>
    <property type="project" value="TreeGrafter"/>
</dbReference>
<dbReference type="CDD" id="cd05802">
    <property type="entry name" value="GlmM"/>
    <property type="match status" value="1"/>
</dbReference>
<dbReference type="FunFam" id="3.30.310.50:FF:000001">
    <property type="entry name" value="Phosphoglucosamine mutase"/>
    <property type="match status" value="1"/>
</dbReference>
<dbReference type="FunFam" id="3.40.120.10:FF:000001">
    <property type="entry name" value="Phosphoglucosamine mutase"/>
    <property type="match status" value="1"/>
</dbReference>
<dbReference type="FunFam" id="3.40.120.10:FF:000003">
    <property type="entry name" value="Phosphoglucosamine mutase"/>
    <property type="match status" value="1"/>
</dbReference>
<dbReference type="Gene3D" id="3.40.120.10">
    <property type="entry name" value="Alpha-D-Glucose-1,6-Bisphosphate, subunit A, domain 3"/>
    <property type="match status" value="3"/>
</dbReference>
<dbReference type="Gene3D" id="3.30.310.50">
    <property type="entry name" value="Alpha-D-phosphohexomutase, C-terminal domain"/>
    <property type="match status" value="1"/>
</dbReference>
<dbReference type="HAMAP" id="MF_01554_B">
    <property type="entry name" value="GlmM_B"/>
    <property type="match status" value="1"/>
</dbReference>
<dbReference type="InterPro" id="IPR005844">
    <property type="entry name" value="A-D-PHexomutase_a/b/a-I"/>
</dbReference>
<dbReference type="InterPro" id="IPR016055">
    <property type="entry name" value="A-D-PHexomutase_a/b/a-I/II/III"/>
</dbReference>
<dbReference type="InterPro" id="IPR005845">
    <property type="entry name" value="A-D-PHexomutase_a/b/a-II"/>
</dbReference>
<dbReference type="InterPro" id="IPR005846">
    <property type="entry name" value="A-D-PHexomutase_a/b/a-III"/>
</dbReference>
<dbReference type="InterPro" id="IPR005843">
    <property type="entry name" value="A-D-PHexomutase_C"/>
</dbReference>
<dbReference type="InterPro" id="IPR036900">
    <property type="entry name" value="A-D-PHexomutase_C_sf"/>
</dbReference>
<dbReference type="InterPro" id="IPR005841">
    <property type="entry name" value="Alpha-D-phosphohexomutase_SF"/>
</dbReference>
<dbReference type="InterPro" id="IPR006352">
    <property type="entry name" value="GlmM_bact"/>
</dbReference>
<dbReference type="InterPro" id="IPR050060">
    <property type="entry name" value="Phosphoglucosamine_mutase"/>
</dbReference>
<dbReference type="NCBIfam" id="TIGR01455">
    <property type="entry name" value="glmM"/>
    <property type="match status" value="1"/>
</dbReference>
<dbReference type="NCBIfam" id="NF008139">
    <property type="entry name" value="PRK10887.1"/>
    <property type="match status" value="1"/>
</dbReference>
<dbReference type="PANTHER" id="PTHR42946:SF1">
    <property type="entry name" value="PHOSPHOGLUCOMUTASE (ALPHA-D-GLUCOSE-1,6-BISPHOSPHATE-DEPENDENT)"/>
    <property type="match status" value="1"/>
</dbReference>
<dbReference type="PANTHER" id="PTHR42946">
    <property type="entry name" value="PHOSPHOHEXOSE MUTASE"/>
    <property type="match status" value="1"/>
</dbReference>
<dbReference type="Pfam" id="PF02878">
    <property type="entry name" value="PGM_PMM_I"/>
    <property type="match status" value="1"/>
</dbReference>
<dbReference type="Pfam" id="PF02879">
    <property type="entry name" value="PGM_PMM_II"/>
    <property type="match status" value="1"/>
</dbReference>
<dbReference type="Pfam" id="PF02880">
    <property type="entry name" value="PGM_PMM_III"/>
    <property type="match status" value="1"/>
</dbReference>
<dbReference type="Pfam" id="PF00408">
    <property type="entry name" value="PGM_PMM_IV"/>
    <property type="match status" value="1"/>
</dbReference>
<dbReference type="PRINTS" id="PR00509">
    <property type="entry name" value="PGMPMM"/>
</dbReference>
<dbReference type="SUPFAM" id="SSF55957">
    <property type="entry name" value="Phosphoglucomutase, C-terminal domain"/>
    <property type="match status" value="1"/>
</dbReference>
<dbReference type="SUPFAM" id="SSF53738">
    <property type="entry name" value="Phosphoglucomutase, first 3 domains"/>
    <property type="match status" value="3"/>
</dbReference>
<organism>
    <name type="scientific">Neisseria meningitidis serogroup C (strain 053442)</name>
    <dbReference type="NCBI Taxonomy" id="374833"/>
    <lineage>
        <taxon>Bacteria</taxon>
        <taxon>Pseudomonadati</taxon>
        <taxon>Pseudomonadota</taxon>
        <taxon>Betaproteobacteria</taxon>
        <taxon>Neisseriales</taxon>
        <taxon>Neisseriaceae</taxon>
        <taxon>Neisseria</taxon>
    </lineage>
</organism>
<protein>
    <recommendedName>
        <fullName evidence="1">Phosphoglucosamine mutase</fullName>
        <ecNumber evidence="1">5.4.2.10</ecNumber>
    </recommendedName>
</protein>
<feature type="chain" id="PRO_1000087771" description="Phosphoglucosamine mutase">
    <location>
        <begin position="1"/>
        <end position="444"/>
    </location>
</feature>
<feature type="active site" description="Phosphoserine intermediate" evidence="1">
    <location>
        <position position="104"/>
    </location>
</feature>
<feature type="binding site" description="via phosphate group" evidence="1">
    <location>
        <position position="104"/>
    </location>
    <ligand>
        <name>Mg(2+)</name>
        <dbReference type="ChEBI" id="CHEBI:18420"/>
    </ligand>
</feature>
<feature type="binding site" evidence="1">
    <location>
        <position position="243"/>
    </location>
    <ligand>
        <name>Mg(2+)</name>
        <dbReference type="ChEBI" id="CHEBI:18420"/>
    </ligand>
</feature>
<feature type="binding site" evidence="1">
    <location>
        <position position="245"/>
    </location>
    <ligand>
        <name>Mg(2+)</name>
        <dbReference type="ChEBI" id="CHEBI:18420"/>
    </ligand>
</feature>
<feature type="binding site" evidence="1">
    <location>
        <position position="247"/>
    </location>
    <ligand>
        <name>Mg(2+)</name>
        <dbReference type="ChEBI" id="CHEBI:18420"/>
    </ligand>
</feature>
<feature type="modified residue" description="Phosphoserine" evidence="1">
    <location>
        <position position="104"/>
    </location>
</feature>
<reference key="1">
    <citation type="journal article" date="2008" name="Genomics">
        <title>Characterization of ST-4821 complex, a unique Neisseria meningitidis clone.</title>
        <authorList>
            <person name="Peng J."/>
            <person name="Yang L."/>
            <person name="Yang F."/>
            <person name="Yang J."/>
            <person name="Yan Y."/>
            <person name="Nie H."/>
            <person name="Zhang X."/>
            <person name="Xiong Z."/>
            <person name="Jiang Y."/>
            <person name="Cheng F."/>
            <person name="Xu X."/>
            <person name="Chen S."/>
            <person name="Sun L."/>
            <person name="Li W."/>
            <person name="Shen Y."/>
            <person name="Shao Z."/>
            <person name="Liang X."/>
            <person name="Xu J."/>
            <person name="Jin Q."/>
        </authorList>
    </citation>
    <scope>NUCLEOTIDE SEQUENCE [LARGE SCALE GENOMIC DNA]</scope>
    <source>
        <strain>053442</strain>
    </source>
</reference>
<evidence type="ECO:0000255" key="1">
    <source>
        <dbReference type="HAMAP-Rule" id="MF_01554"/>
    </source>
</evidence>
<sequence length="444" mass="47831">MAKKYFGTDGVRGEVGQFPITPDFVLKLGYAAGQVLVQHDTDQKPTVLIGKDTRISGYMLEAALVAGFTAAGVNVIQTGPLPTPGVAYLTRALRLSAGVMISASHNAYSDNGIKFFAEGGVKLSDEIELEIEAKIDEEMKTQPSARLGRARRISGADDRYIEFCKSTFPTHSDLRGLKLVVDAANGAAYSVAPKVFHELGAQVVSIGDEPDGYNINEKCGATHTKTLQAAVLQNEADYGIALDGDGDRLMMVDKNGKVYDGDSLIYVIAKARAREGINIGGVVGTVMTNMAMEIALKEQGVDFCRAKVGDRYVLEQLNQRSWLIGGEASGHILCMDKHNTGDGIISALQVLAALQTLNQDLATVCADWQPYPQTMINVRIQKGQKWQEASKDVLAEVEKELEGKGRVVLRASGTEPVVRVMVEARQADWARDGAERIASAIGSL</sequence>